<protein>
    <recommendedName>
        <fullName>Putative antiporter subunit mnhG2</fullName>
    </recommendedName>
    <alternativeName>
        <fullName>Mrp complex subunit G2</fullName>
    </alternativeName>
    <alternativeName>
        <fullName>Putative NADH-ubiquinone oxidoreductase subunit mnhF2</fullName>
    </alternativeName>
</protein>
<reference key="1">
    <citation type="journal article" date="2007" name="BMC Microbiol.">
        <title>Subtle genetic changes enhance virulence of methicillin resistant and sensitive Staphylococcus aureus.</title>
        <authorList>
            <person name="Highlander S.K."/>
            <person name="Hulten K.G."/>
            <person name="Qin X."/>
            <person name="Jiang H."/>
            <person name="Yerrapragada S."/>
            <person name="Mason E.O. Jr."/>
            <person name="Shang Y."/>
            <person name="Williams T.M."/>
            <person name="Fortunov R.M."/>
            <person name="Liu Y."/>
            <person name="Igboeli O."/>
            <person name="Petrosino J."/>
            <person name="Tirumalai M."/>
            <person name="Uzman A."/>
            <person name="Fox G.E."/>
            <person name="Cardenas A.M."/>
            <person name="Muzny D.M."/>
            <person name="Hemphill L."/>
            <person name="Ding Y."/>
            <person name="Dugan S."/>
            <person name="Blyth P.R."/>
            <person name="Buhay C.J."/>
            <person name="Dinh H.H."/>
            <person name="Hawes A.C."/>
            <person name="Holder M."/>
            <person name="Kovar C.L."/>
            <person name="Lee S.L."/>
            <person name="Liu W."/>
            <person name="Nazareth L.V."/>
            <person name="Wang Q."/>
            <person name="Zhou J."/>
            <person name="Kaplan S.L."/>
            <person name="Weinstock G.M."/>
        </authorList>
    </citation>
    <scope>NUCLEOTIDE SEQUENCE [LARGE SCALE GENOMIC DNA]</scope>
    <source>
        <strain>USA300 / TCH1516</strain>
    </source>
</reference>
<feature type="chain" id="PRO_0000372184" description="Putative antiporter subunit mnhG2">
    <location>
        <begin position="1"/>
        <end position="145"/>
    </location>
</feature>
<feature type="transmembrane region" description="Helical" evidence="2">
    <location>
        <begin position="11"/>
        <end position="31"/>
    </location>
</feature>
<feature type="transmembrane region" description="Helical" evidence="2">
    <location>
        <begin position="51"/>
        <end position="71"/>
    </location>
</feature>
<feature type="transmembrane region" description="Helical" evidence="2">
    <location>
        <begin position="72"/>
        <end position="92"/>
    </location>
</feature>
<keyword id="KW-0050">Antiport</keyword>
<keyword id="KW-1003">Cell membrane</keyword>
<keyword id="KW-0406">Ion transport</keyword>
<keyword id="KW-0472">Membrane</keyword>
<keyword id="KW-0812">Transmembrane</keyword>
<keyword id="KW-1133">Transmembrane helix</keyword>
<keyword id="KW-0813">Transport</keyword>
<organism>
    <name type="scientific">Staphylococcus aureus (strain USA300 / TCH1516)</name>
    <dbReference type="NCBI Taxonomy" id="451516"/>
    <lineage>
        <taxon>Bacteria</taxon>
        <taxon>Bacillati</taxon>
        <taxon>Bacillota</taxon>
        <taxon>Bacilli</taxon>
        <taxon>Bacillales</taxon>
        <taxon>Staphylococcaceae</taxon>
        <taxon>Staphylococcus</taxon>
    </lineage>
</organism>
<name>MNHG2_STAAT</name>
<proteinExistence type="inferred from homology"/>
<dbReference type="EMBL" id="CP000730">
    <property type="protein sequence ID" value="ABX28671.1"/>
    <property type="molecule type" value="Genomic_DNA"/>
</dbReference>
<dbReference type="RefSeq" id="WP_000406611.1">
    <property type="nucleotide sequence ID" value="NC_010079.1"/>
</dbReference>
<dbReference type="SMR" id="A8Z150"/>
<dbReference type="KEGG" id="sax:USA300HOU_0649"/>
<dbReference type="HOGENOM" id="CLU_121334_0_3_9"/>
<dbReference type="GO" id="GO:0005886">
    <property type="term" value="C:plasma membrane"/>
    <property type="evidence" value="ECO:0007669"/>
    <property type="project" value="UniProtKB-SubCell"/>
</dbReference>
<dbReference type="GO" id="GO:0015385">
    <property type="term" value="F:sodium:proton antiporter activity"/>
    <property type="evidence" value="ECO:0007669"/>
    <property type="project" value="TreeGrafter"/>
</dbReference>
<dbReference type="InterPro" id="IPR005133">
    <property type="entry name" value="PhaG_MnhG_YufB"/>
</dbReference>
<dbReference type="NCBIfam" id="TIGR01300">
    <property type="entry name" value="CPA3_mnhG_phaG"/>
    <property type="match status" value="1"/>
</dbReference>
<dbReference type="NCBIfam" id="NF009236">
    <property type="entry name" value="PRK12586.1"/>
    <property type="match status" value="1"/>
</dbReference>
<dbReference type="NCBIfam" id="NF009314">
    <property type="entry name" value="PRK12674.1-2"/>
    <property type="match status" value="1"/>
</dbReference>
<dbReference type="PANTHER" id="PTHR34703">
    <property type="entry name" value="ANTIPORTER SUBUNIT MNHG2-RELATED"/>
    <property type="match status" value="1"/>
</dbReference>
<dbReference type="PANTHER" id="PTHR34703:SF1">
    <property type="entry name" value="ANTIPORTER SUBUNIT MNHG2-RELATED"/>
    <property type="match status" value="1"/>
</dbReference>
<dbReference type="Pfam" id="PF03334">
    <property type="entry name" value="PhaG_MnhG_YufB"/>
    <property type="match status" value="1"/>
</dbReference>
<evidence type="ECO:0000250" key="1"/>
<evidence type="ECO:0000255" key="2"/>
<evidence type="ECO:0000305" key="3"/>
<accession>A8Z150</accession>
<comment type="subunit">
    <text evidence="1">May form a heterooligomeric complex that consists of seven subunits: mnhA2, mnhB2, mnhC2, mnhD2, mnhE2, mnhF2 and mnhG2.</text>
</comment>
<comment type="subcellular location">
    <subcellularLocation>
        <location evidence="3">Cell membrane</location>
        <topology evidence="3">Multi-pass membrane protein</topology>
    </subcellularLocation>
</comment>
<comment type="similarity">
    <text evidence="3">Belongs to the CPA3 antiporters (TC 2.A.63) subunit G family.</text>
</comment>
<gene>
    <name type="primary">mnhG2</name>
    <name type="synonym">mrpG2</name>
    <name type="ordered locus">USA300HOU_0649</name>
</gene>
<sequence>MEITKEIFSLIAAVMLLLGSFIALISAIGIVKFQDVFLRSHAATKSSTLSVLLTLIGVLIYFIVNTGFFSVRLLLSLVFINLTSPVGMHLVARAAYRNGAYMYRKNDAHTHASILLSSNEQNSTEALQLRAEKREEHRKKWYQND</sequence>